<accession>Q3T142</accession>
<sequence>MAAPLPRSLSCLSRAVGWWSRQPILMTQSTAVVPVRTKKRFTPPIYQPKYKTEKEFTEYARKAGLVIPQESLERPIHLACTASIFDAYVPPEGDARVSSLSKEGLAQRTERLKKNVASQLSIRRIKESDPNFKVKDFPEKAQDIFIEAHLCLNNSDHDRLHTLVTENCFPDMVWDIKYKTVSWSFVESLEPPQVVQVRCSSLVTKSNTYGQVTVRMHTRQTLAIYDRFGRLMYGQEDVPRDVLEYVVFEKHLANPYGSWRMHGKIVPPWAPPKQPILKTVMIPGPQLKPGEEYEELQREAHKPQLA</sequence>
<proteinExistence type="evidence at transcript level"/>
<reference key="1">
    <citation type="submission" date="2005-08" db="EMBL/GenBank/DDBJ databases">
        <authorList>
            <consortium name="NIH - Mammalian Gene Collection (MGC) project"/>
        </authorList>
    </citation>
    <scope>NUCLEOTIDE SEQUENCE [LARGE SCALE MRNA]</scope>
    <source>
        <strain>Crossbred X Angus</strain>
        <tissue>Ileum</tissue>
    </source>
</reference>
<keyword id="KW-0496">Mitochondrion</keyword>
<keyword id="KW-1185">Reference proteome</keyword>
<keyword id="KW-0687">Ribonucleoprotein</keyword>
<keyword id="KW-0689">Ribosomal protein</keyword>
<keyword id="KW-0809">Transit peptide</keyword>
<organism>
    <name type="scientific">Bos taurus</name>
    <name type="common">Bovine</name>
    <dbReference type="NCBI Taxonomy" id="9913"/>
    <lineage>
        <taxon>Eukaryota</taxon>
        <taxon>Metazoa</taxon>
        <taxon>Chordata</taxon>
        <taxon>Craniata</taxon>
        <taxon>Vertebrata</taxon>
        <taxon>Euteleostomi</taxon>
        <taxon>Mammalia</taxon>
        <taxon>Eutheria</taxon>
        <taxon>Laurasiatheria</taxon>
        <taxon>Artiodactyla</taxon>
        <taxon>Ruminantia</taxon>
        <taxon>Pecora</taxon>
        <taxon>Bovidae</taxon>
        <taxon>Bovinae</taxon>
        <taxon>Bos</taxon>
    </lineage>
</organism>
<feature type="transit peptide" description="Mitochondrion" evidence="2">
    <location>
        <begin position="1"/>
        <end status="unknown"/>
    </location>
</feature>
<feature type="chain" id="PRO_0000045909" description="Large ribosomal subunit protein mL45">
    <location>
        <begin status="unknown"/>
        <end position="306"/>
    </location>
</feature>
<name>RM45_BOVIN</name>
<protein>
    <recommendedName>
        <fullName evidence="3">Large ribosomal subunit protein mL45</fullName>
    </recommendedName>
    <alternativeName>
        <fullName>39S ribosomal protein L45, mitochondrial</fullName>
        <shortName>L45mt</shortName>
        <shortName>MRP-L45</shortName>
    </alternativeName>
</protein>
<comment type="function">
    <text evidence="1">Component of the mitochondrial large ribosomal subunit (mt-LSU). Within the mitochondrial ribosomes, required to direct the nascent polypeptide toward the tunnel exit and position the exit at a distance from the membrane surface.</text>
</comment>
<comment type="subunit">
    <text evidence="1">Component of the mitochondrial ribosome large subunit (39S) which comprises a 16S rRNA and about 50 distinct proteins.</text>
</comment>
<comment type="subcellular location">
    <subcellularLocation>
        <location evidence="1">Mitochondrion</location>
    </subcellularLocation>
</comment>
<comment type="similarity">
    <text evidence="3">Belongs to the mitochondrion-specific ribosomal protein mL45 family.</text>
</comment>
<dbReference type="EMBL" id="BC102136">
    <property type="protein sequence ID" value="AAI02137.1"/>
    <property type="molecule type" value="mRNA"/>
</dbReference>
<dbReference type="RefSeq" id="NP_001030272.1">
    <property type="nucleotide sequence ID" value="NM_001035100.2"/>
</dbReference>
<dbReference type="SMR" id="Q3T142"/>
<dbReference type="FunCoup" id="Q3T142">
    <property type="interactions" value="1039"/>
</dbReference>
<dbReference type="IntAct" id="Q3T142">
    <property type="interactions" value="2"/>
</dbReference>
<dbReference type="STRING" id="9913.ENSBTAP00000034751"/>
<dbReference type="iPTMnet" id="Q3T142"/>
<dbReference type="PaxDb" id="9913-ENSBTAP00000034751"/>
<dbReference type="GeneID" id="511479"/>
<dbReference type="KEGG" id="bta:511479"/>
<dbReference type="CTD" id="84311"/>
<dbReference type="eggNOG" id="KOG4599">
    <property type="taxonomic scope" value="Eukaryota"/>
</dbReference>
<dbReference type="InParanoid" id="Q3T142"/>
<dbReference type="OrthoDB" id="19619at2759"/>
<dbReference type="Proteomes" id="UP000009136">
    <property type="component" value="Unplaced"/>
</dbReference>
<dbReference type="GO" id="GO:0005743">
    <property type="term" value="C:mitochondrial inner membrane"/>
    <property type="evidence" value="ECO:0000304"/>
    <property type="project" value="Reactome"/>
</dbReference>
<dbReference type="GO" id="GO:0005762">
    <property type="term" value="C:mitochondrial large ribosomal subunit"/>
    <property type="evidence" value="ECO:0000250"/>
    <property type="project" value="UniProtKB"/>
</dbReference>
<dbReference type="GO" id="GO:0005739">
    <property type="term" value="C:mitochondrion"/>
    <property type="evidence" value="ECO:0000250"/>
    <property type="project" value="UniProtKB"/>
</dbReference>
<dbReference type="GO" id="GO:0003735">
    <property type="term" value="F:structural constituent of ribosome"/>
    <property type="evidence" value="ECO:0000250"/>
    <property type="project" value="UniProtKB"/>
</dbReference>
<dbReference type="GO" id="GO:0032543">
    <property type="term" value="P:mitochondrial translation"/>
    <property type="evidence" value="ECO:0000250"/>
    <property type="project" value="UniProtKB"/>
</dbReference>
<dbReference type="FunFam" id="3.10.450.240:FF:000003">
    <property type="entry name" value="39S ribosomal protein L45, mitochondrial"/>
    <property type="match status" value="1"/>
</dbReference>
<dbReference type="Gene3D" id="3.10.450.240">
    <property type="match status" value="1"/>
</dbReference>
<dbReference type="InterPro" id="IPR051975">
    <property type="entry name" value="mtLSU_mL45"/>
</dbReference>
<dbReference type="InterPro" id="IPR032710">
    <property type="entry name" value="NTF2-like_dom_sf"/>
</dbReference>
<dbReference type="InterPro" id="IPR007379">
    <property type="entry name" value="Tim44-like_dom"/>
</dbReference>
<dbReference type="PANTHER" id="PTHR28554">
    <property type="entry name" value="39S RIBOSOMAL PROTEIN L45, MITOCHONDRIAL"/>
    <property type="match status" value="1"/>
</dbReference>
<dbReference type="PANTHER" id="PTHR28554:SF1">
    <property type="entry name" value="LARGE RIBOSOMAL SUBUNIT PROTEIN ML45"/>
    <property type="match status" value="1"/>
</dbReference>
<dbReference type="Pfam" id="PF04280">
    <property type="entry name" value="Tim44"/>
    <property type="match status" value="1"/>
</dbReference>
<dbReference type="SMART" id="SM00978">
    <property type="entry name" value="Tim44"/>
    <property type="match status" value="1"/>
</dbReference>
<dbReference type="SUPFAM" id="SSF54427">
    <property type="entry name" value="NTF2-like"/>
    <property type="match status" value="1"/>
</dbReference>
<gene>
    <name type="primary">MRPL45</name>
</gene>
<evidence type="ECO:0000250" key="1">
    <source>
        <dbReference type="UniProtKB" id="Q9BRJ2"/>
    </source>
</evidence>
<evidence type="ECO:0000255" key="2"/>
<evidence type="ECO:0000305" key="3"/>